<evidence type="ECO:0000255" key="1">
    <source>
        <dbReference type="HAMAP-Rule" id="MF_01456"/>
    </source>
</evidence>
<name>NUOK_SHIB3</name>
<organism>
    <name type="scientific">Shigella boydii serotype 18 (strain CDC 3083-94 / BS512)</name>
    <dbReference type="NCBI Taxonomy" id="344609"/>
    <lineage>
        <taxon>Bacteria</taxon>
        <taxon>Pseudomonadati</taxon>
        <taxon>Pseudomonadota</taxon>
        <taxon>Gammaproteobacteria</taxon>
        <taxon>Enterobacterales</taxon>
        <taxon>Enterobacteriaceae</taxon>
        <taxon>Shigella</taxon>
    </lineage>
</organism>
<sequence>MIPLQHGLILSAILFVLGLTGLVIRRNLLFMLIGLEIMINASALAFVVAGSYWGQTDGQVMYILAISLAAAEASIGLALLLQLHRRRQNLNIDSVSEMRG</sequence>
<proteinExistence type="inferred from homology"/>
<comment type="function">
    <text evidence="1">NDH-1 shuttles electrons from NADH, via FMN and iron-sulfur (Fe-S) centers, to quinones in the respiratory chain. The immediate electron acceptor for the enzyme in this species is believed to be ubiquinone. Couples the redox reaction to proton translocation (for every two electrons transferred, four hydrogen ions are translocated across the cytoplasmic membrane), and thus conserves the redox energy in a proton gradient.</text>
</comment>
<comment type="catalytic activity">
    <reaction evidence="1">
        <text>a quinone + NADH + 5 H(+)(in) = a quinol + NAD(+) + 4 H(+)(out)</text>
        <dbReference type="Rhea" id="RHEA:57888"/>
        <dbReference type="ChEBI" id="CHEBI:15378"/>
        <dbReference type="ChEBI" id="CHEBI:24646"/>
        <dbReference type="ChEBI" id="CHEBI:57540"/>
        <dbReference type="ChEBI" id="CHEBI:57945"/>
        <dbReference type="ChEBI" id="CHEBI:132124"/>
    </reaction>
</comment>
<comment type="subunit">
    <text evidence="1">NDH-1 is composed of 13 different subunits. Subunits NuoA, H, J, K, L, M, N constitute the membrane sector of the complex.</text>
</comment>
<comment type="subcellular location">
    <subcellularLocation>
        <location evidence="1">Cell inner membrane</location>
        <topology evidence="1">Multi-pass membrane protein</topology>
    </subcellularLocation>
</comment>
<comment type="similarity">
    <text evidence="1">Belongs to the complex I subunit 4L family.</text>
</comment>
<protein>
    <recommendedName>
        <fullName evidence="1">NADH-quinone oxidoreductase subunit K</fullName>
        <ecNumber evidence="1">7.1.1.-</ecNumber>
    </recommendedName>
    <alternativeName>
        <fullName evidence="1">NADH dehydrogenase I subunit K</fullName>
    </alternativeName>
    <alternativeName>
        <fullName evidence="1">NDH-1 subunit K</fullName>
    </alternativeName>
</protein>
<keyword id="KW-0997">Cell inner membrane</keyword>
<keyword id="KW-1003">Cell membrane</keyword>
<keyword id="KW-0472">Membrane</keyword>
<keyword id="KW-0520">NAD</keyword>
<keyword id="KW-0874">Quinone</keyword>
<keyword id="KW-1185">Reference proteome</keyword>
<keyword id="KW-1278">Translocase</keyword>
<keyword id="KW-0812">Transmembrane</keyword>
<keyword id="KW-1133">Transmembrane helix</keyword>
<keyword id="KW-0813">Transport</keyword>
<keyword id="KW-0830">Ubiquinone</keyword>
<reference key="1">
    <citation type="submission" date="2008-05" db="EMBL/GenBank/DDBJ databases">
        <title>Complete sequence of Shigella boydii serotype 18 strain BS512.</title>
        <authorList>
            <person name="Rasko D.A."/>
            <person name="Rosovitz M."/>
            <person name="Maurelli A.T."/>
            <person name="Myers G."/>
            <person name="Seshadri R."/>
            <person name="Cer R."/>
            <person name="Jiang L."/>
            <person name="Ravel J."/>
            <person name="Sebastian Y."/>
        </authorList>
    </citation>
    <scope>NUCLEOTIDE SEQUENCE [LARGE SCALE GENOMIC DNA]</scope>
    <source>
        <strain>CDC 3083-94 / BS512</strain>
    </source>
</reference>
<gene>
    <name evidence="1" type="primary">nuoK</name>
    <name type="ordered locus">SbBS512_E2655</name>
</gene>
<accession>B2TW60</accession>
<dbReference type="EC" id="7.1.1.-" evidence="1"/>
<dbReference type="EMBL" id="CP001063">
    <property type="protein sequence ID" value="ACD09342.1"/>
    <property type="molecule type" value="Genomic_DNA"/>
</dbReference>
<dbReference type="RefSeq" id="WP_000612645.1">
    <property type="nucleotide sequence ID" value="NC_010658.1"/>
</dbReference>
<dbReference type="SMR" id="B2TW60"/>
<dbReference type="STRING" id="344609.SbBS512_E2655"/>
<dbReference type="KEGG" id="sbc:SbBS512_E2655"/>
<dbReference type="HOGENOM" id="CLU_144724_0_1_6"/>
<dbReference type="Proteomes" id="UP000001030">
    <property type="component" value="Chromosome"/>
</dbReference>
<dbReference type="GO" id="GO:0030964">
    <property type="term" value="C:NADH dehydrogenase complex"/>
    <property type="evidence" value="ECO:0007669"/>
    <property type="project" value="TreeGrafter"/>
</dbReference>
<dbReference type="GO" id="GO:0005886">
    <property type="term" value="C:plasma membrane"/>
    <property type="evidence" value="ECO:0007669"/>
    <property type="project" value="UniProtKB-SubCell"/>
</dbReference>
<dbReference type="GO" id="GO:0050136">
    <property type="term" value="F:NADH:ubiquinone reductase (non-electrogenic) activity"/>
    <property type="evidence" value="ECO:0007669"/>
    <property type="project" value="UniProtKB-UniRule"/>
</dbReference>
<dbReference type="GO" id="GO:0048038">
    <property type="term" value="F:quinone binding"/>
    <property type="evidence" value="ECO:0007669"/>
    <property type="project" value="UniProtKB-KW"/>
</dbReference>
<dbReference type="GO" id="GO:0042773">
    <property type="term" value="P:ATP synthesis coupled electron transport"/>
    <property type="evidence" value="ECO:0007669"/>
    <property type="project" value="InterPro"/>
</dbReference>
<dbReference type="FunFam" id="1.10.287.3510:FF:000001">
    <property type="entry name" value="NADH-quinone oxidoreductase subunit K"/>
    <property type="match status" value="1"/>
</dbReference>
<dbReference type="Gene3D" id="1.10.287.3510">
    <property type="match status" value="1"/>
</dbReference>
<dbReference type="HAMAP" id="MF_01456">
    <property type="entry name" value="NDH1_NuoK"/>
    <property type="match status" value="1"/>
</dbReference>
<dbReference type="InterPro" id="IPR001133">
    <property type="entry name" value="NADH_UbQ_OxRdtase_chain4L/K"/>
</dbReference>
<dbReference type="InterPro" id="IPR039428">
    <property type="entry name" value="NUOK/Mnh_C1-like"/>
</dbReference>
<dbReference type="NCBIfam" id="NF004319">
    <property type="entry name" value="PRK05715.1-1"/>
    <property type="match status" value="1"/>
</dbReference>
<dbReference type="NCBIfam" id="NF004320">
    <property type="entry name" value="PRK05715.1-2"/>
    <property type="match status" value="1"/>
</dbReference>
<dbReference type="PANTHER" id="PTHR11434:SF16">
    <property type="entry name" value="NADH-UBIQUINONE OXIDOREDUCTASE CHAIN 4L"/>
    <property type="match status" value="1"/>
</dbReference>
<dbReference type="PANTHER" id="PTHR11434">
    <property type="entry name" value="NADH-UBIQUINONE OXIDOREDUCTASE SUBUNIT ND4L"/>
    <property type="match status" value="1"/>
</dbReference>
<dbReference type="Pfam" id="PF00420">
    <property type="entry name" value="Oxidored_q2"/>
    <property type="match status" value="1"/>
</dbReference>
<feature type="chain" id="PRO_0000390236" description="NADH-quinone oxidoreductase subunit K">
    <location>
        <begin position="1"/>
        <end position="100"/>
    </location>
</feature>
<feature type="transmembrane region" description="Helical" evidence="1">
    <location>
        <begin position="4"/>
        <end position="24"/>
    </location>
</feature>
<feature type="transmembrane region" description="Helical" evidence="1">
    <location>
        <begin position="28"/>
        <end position="48"/>
    </location>
</feature>
<feature type="transmembrane region" description="Helical" evidence="1">
    <location>
        <begin position="60"/>
        <end position="80"/>
    </location>
</feature>